<dbReference type="EMBL" id="CP000964">
    <property type="protein sequence ID" value="ACI08273.1"/>
    <property type="molecule type" value="Genomic_DNA"/>
</dbReference>
<dbReference type="SMR" id="B5XSS2"/>
<dbReference type="KEGG" id="kpe:KPK_0492"/>
<dbReference type="HOGENOM" id="CLU_046483_2_1_6"/>
<dbReference type="Proteomes" id="UP000001734">
    <property type="component" value="Chromosome"/>
</dbReference>
<dbReference type="GO" id="GO:0022627">
    <property type="term" value="C:cytosolic small ribosomal subunit"/>
    <property type="evidence" value="ECO:0007669"/>
    <property type="project" value="TreeGrafter"/>
</dbReference>
<dbReference type="GO" id="GO:0003723">
    <property type="term" value="F:RNA binding"/>
    <property type="evidence" value="ECO:0007669"/>
    <property type="project" value="TreeGrafter"/>
</dbReference>
<dbReference type="GO" id="GO:0003735">
    <property type="term" value="F:structural constituent of ribosome"/>
    <property type="evidence" value="ECO:0007669"/>
    <property type="project" value="InterPro"/>
</dbReference>
<dbReference type="GO" id="GO:0006412">
    <property type="term" value="P:translation"/>
    <property type="evidence" value="ECO:0007669"/>
    <property type="project" value="UniProtKB-UniRule"/>
</dbReference>
<dbReference type="FunFam" id="3.30.230.10:FF:000001">
    <property type="entry name" value="30S ribosomal protein S9"/>
    <property type="match status" value="1"/>
</dbReference>
<dbReference type="Gene3D" id="3.30.230.10">
    <property type="match status" value="1"/>
</dbReference>
<dbReference type="HAMAP" id="MF_00532_B">
    <property type="entry name" value="Ribosomal_uS9_B"/>
    <property type="match status" value="1"/>
</dbReference>
<dbReference type="InterPro" id="IPR020568">
    <property type="entry name" value="Ribosomal_Su5_D2-typ_SF"/>
</dbReference>
<dbReference type="InterPro" id="IPR000754">
    <property type="entry name" value="Ribosomal_uS9"/>
</dbReference>
<dbReference type="InterPro" id="IPR023035">
    <property type="entry name" value="Ribosomal_uS9_bac/plastid"/>
</dbReference>
<dbReference type="InterPro" id="IPR020574">
    <property type="entry name" value="Ribosomal_uS9_CS"/>
</dbReference>
<dbReference type="InterPro" id="IPR014721">
    <property type="entry name" value="Ribsml_uS5_D2-typ_fold_subgr"/>
</dbReference>
<dbReference type="NCBIfam" id="NF001099">
    <property type="entry name" value="PRK00132.1"/>
    <property type="match status" value="1"/>
</dbReference>
<dbReference type="PANTHER" id="PTHR21569">
    <property type="entry name" value="RIBOSOMAL PROTEIN S9"/>
    <property type="match status" value="1"/>
</dbReference>
<dbReference type="PANTHER" id="PTHR21569:SF1">
    <property type="entry name" value="SMALL RIBOSOMAL SUBUNIT PROTEIN US9M"/>
    <property type="match status" value="1"/>
</dbReference>
<dbReference type="Pfam" id="PF00380">
    <property type="entry name" value="Ribosomal_S9"/>
    <property type="match status" value="1"/>
</dbReference>
<dbReference type="SUPFAM" id="SSF54211">
    <property type="entry name" value="Ribosomal protein S5 domain 2-like"/>
    <property type="match status" value="1"/>
</dbReference>
<dbReference type="PROSITE" id="PS00360">
    <property type="entry name" value="RIBOSOMAL_S9"/>
    <property type="match status" value="1"/>
</dbReference>
<comment type="similarity">
    <text evidence="1">Belongs to the universal ribosomal protein uS9 family.</text>
</comment>
<name>RS9_KLEP3</name>
<organism>
    <name type="scientific">Klebsiella pneumoniae (strain 342)</name>
    <dbReference type="NCBI Taxonomy" id="507522"/>
    <lineage>
        <taxon>Bacteria</taxon>
        <taxon>Pseudomonadati</taxon>
        <taxon>Pseudomonadota</taxon>
        <taxon>Gammaproteobacteria</taxon>
        <taxon>Enterobacterales</taxon>
        <taxon>Enterobacteriaceae</taxon>
        <taxon>Klebsiella/Raoultella group</taxon>
        <taxon>Klebsiella</taxon>
        <taxon>Klebsiella pneumoniae complex</taxon>
    </lineage>
</organism>
<reference key="1">
    <citation type="journal article" date="2008" name="PLoS Genet.">
        <title>Complete genome sequence of the N2-fixing broad host range endophyte Klebsiella pneumoniae 342 and virulence predictions verified in mice.</title>
        <authorList>
            <person name="Fouts D.E."/>
            <person name="Tyler H.L."/>
            <person name="DeBoy R.T."/>
            <person name="Daugherty S."/>
            <person name="Ren Q."/>
            <person name="Badger J.H."/>
            <person name="Durkin A.S."/>
            <person name="Huot H."/>
            <person name="Shrivastava S."/>
            <person name="Kothari S."/>
            <person name="Dodson R.J."/>
            <person name="Mohamoud Y."/>
            <person name="Khouri H."/>
            <person name="Roesch L.F.W."/>
            <person name="Krogfelt K.A."/>
            <person name="Struve C."/>
            <person name="Triplett E.W."/>
            <person name="Methe B.A."/>
        </authorList>
    </citation>
    <scope>NUCLEOTIDE SEQUENCE [LARGE SCALE GENOMIC DNA]</scope>
    <source>
        <strain>342</strain>
    </source>
</reference>
<gene>
    <name evidence="1" type="primary">rpsI</name>
    <name type="ordered locus">KPK_0492</name>
</gene>
<protein>
    <recommendedName>
        <fullName evidence="1">Small ribosomal subunit protein uS9</fullName>
    </recommendedName>
    <alternativeName>
        <fullName evidence="2">30S ribosomal protein S9</fullName>
    </alternativeName>
</protein>
<feature type="chain" id="PRO_1000128133" description="Small ribosomal subunit protein uS9">
    <location>
        <begin position="1"/>
        <end position="130"/>
    </location>
</feature>
<evidence type="ECO:0000255" key="1">
    <source>
        <dbReference type="HAMAP-Rule" id="MF_00532"/>
    </source>
</evidence>
<evidence type="ECO:0000305" key="2"/>
<sequence length="130" mass="14826">MAENQYYGTGRRKSSAARVFIKPGNGKIVINQRSLEQYFGRETARMVVRQPLELVDMVEKLDLYITVKGGGISGQAGAIRHGITRALMEYDESLRGELRKAGFVTRDARQVERKKVGLRKARRRPQFSKR</sequence>
<accession>B5XSS2</accession>
<keyword id="KW-0687">Ribonucleoprotein</keyword>
<keyword id="KW-0689">Ribosomal protein</keyword>
<proteinExistence type="inferred from homology"/>